<accession>B2GFD7</accession>
<feature type="chain" id="PRO_1000092092" description="4-diphosphocytidyl-2-C-methyl-D-erythritol kinase">
    <location>
        <begin position="1"/>
        <end position="283"/>
    </location>
</feature>
<feature type="active site" evidence="1">
    <location>
        <position position="10"/>
    </location>
</feature>
<feature type="active site" evidence="1">
    <location>
        <position position="137"/>
    </location>
</feature>
<feature type="binding site" evidence="1">
    <location>
        <begin position="95"/>
        <end position="105"/>
    </location>
    <ligand>
        <name>ATP</name>
        <dbReference type="ChEBI" id="CHEBI:30616"/>
    </ligand>
</feature>
<gene>
    <name evidence="1" type="primary">ispE</name>
    <name type="ordered locus">LAF_0190</name>
</gene>
<reference key="1">
    <citation type="journal article" date="2008" name="DNA Res.">
        <title>Comparative genome analysis of Lactobacillus reuteri and Lactobacillus fermentum reveal a genomic island for reuterin and cobalamin production.</title>
        <authorList>
            <person name="Morita H."/>
            <person name="Toh H."/>
            <person name="Fukuda S."/>
            <person name="Horikawa H."/>
            <person name="Oshima K."/>
            <person name="Suzuki T."/>
            <person name="Murakami M."/>
            <person name="Hisamatsu S."/>
            <person name="Kato Y."/>
            <person name="Takizawa T."/>
            <person name="Fukuoka H."/>
            <person name="Yoshimura T."/>
            <person name="Itoh K."/>
            <person name="O'Sullivan D.J."/>
            <person name="McKay L.L."/>
            <person name="Ohno H."/>
            <person name="Kikuchi J."/>
            <person name="Masaoka T."/>
            <person name="Hattori M."/>
        </authorList>
    </citation>
    <scope>NUCLEOTIDE SEQUENCE [LARGE SCALE GENOMIC DNA]</scope>
    <source>
        <strain>NBRC 3956 / LMG 18251</strain>
    </source>
</reference>
<keyword id="KW-0067">ATP-binding</keyword>
<keyword id="KW-0414">Isoprene biosynthesis</keyword>
<keyword id="KW-0418">Kinase</keyword>
<keyword id="KW-0547">Nucleotide-binding</keyword>
<keyword id="KW-1185">Reference proteome</keyword>
<keyword id="KW-0808">Transferase</keyword>
<organism>
    <name type="scientific">Limosilactobacillus fermentum (strain NBRC 3956 / LMG 18251)</name>
    <name type="common">Lactobacillus fermentum</name>
    <dbReference type="NCBI Taxonomy" id="334390"/>
    <lineage>
        <taxon>Bacteria</taxon>
        <taxon>Bacillati</taxon>
        <taxon>Bacillota</taxon>
        <taxon>Bacilli</taxon>
        <taxon>Lactobacillales</taxon>
        <taxon>Lactobacillaceae</taxon>
        <taxon>Limosilactobacillus</taxon>
    </lineage>
</organism>
<name>ISPE_LIMF3</name>
<dbReference type="EC" id="2.7.1.148" evidence="1"/>
<dbReference type="EMBL" id="AP008937">
    <property type="protein sequence ID" value="BAG26526.1"/>
    <property type="molecule type" value="Genomic_DNA"/>
</dbReference>
<dbReference type="RefSeq" id="WP_003683980.1">
    <property type="nucleotide sequence ID" value="NC_010610.1"/>
</dbReference>
<dbReference type="SMR" id="B2GFD7"/>
<dbReference type="GeneID" id="83715499"/>
<dbReference type="KEGG" id="lfe:LAF_0190"/>
<dbReference type="eggNOG" id="COG1947">
    <property type="taxonomic scope" value="Bacteria"/>
</dbReference>
<dbReference type="HOGENOM" id="CLU_053057_1_1_9"/>
<dbReference type="UniPathway" id="UPA00056">
    <property type="reaction ID" value="UER00094"/>
</dbReference>
<dbReference type="Proteomes" id="UP000001697">
    <property type="component" value="Chromosome"/>
</dbReference>
<dbReference type="GO" id="GO:0050515">
    <property type="term" value="F:4-(cytidine 5'-diphospho)-2-C-methyl-D-erythritol kinase activity"/>
    <property type="evidence" value="ECO:0007669"/>
    <property type="project" value="UniProtKB-UniRule"/>
</dbReference>
<dbReference type="GO" id="GO:0005524">
    <property type="term" value="F:ATP binding"/>
    <property type="evidence" value="ECO:0007669"/>
    <property type="project" value="UniProtKB-UniRule"/>
</dbReference>
<dbReference type="GO" id="GO:0019288">
    <property type="term" value="P:isopentenyl diphosphate biosynthetic process, methylerythritol 4-phosphate pathway"/>
    <property type="evidence" value="ECO:0007669"/>
    <property type="project" value="UniProtKB-UniRule"/>
</dbReference>
<dbReference type="GO" id="GO:0016114">
    <property type="term" value="P:terpenoid biosynthetic process"/>
    <property type="evidence" value="ECO:0007669"/>
    <property type="project" value="InterPro"/>
</dbReference>
<dbReference type="FunFam" id="3.30.70.890:FF:000006">
    <property type="entry name" value="4-diphosphocytidyl-2-C-methyl-D-erythritol kinase"/>
    <property type="match status" value="1"/>
</dbReference>
<dbReference type="Gene3D" id="3.30.230.10">
    <property type="match status" value="1"/>
</dbReference>
<dbReference type="Gene3D" id="3.30.70.890">
    <property type="entry name" value="GHMP kinase, C-terminal domain"/>
    <property type="match status" value="1"/>
</dbReference>
<dbReference type="HAMAP" id="MF_00061">
    <property type="entry name" value="IspE"/>
    <property type="match status" value="1"/>
</dbReference>
<dbReference type="InterPro" id="IPR013750">
    <property type="entry name" value="GHMP_kinase_C_dom"/>
</dbReference>
<dbReference type="InterPro" id="IPR036554">
    <property type="entry name" value="GHMP_kinase_C_sf"/>
</dbReference>
<dbReference type="InterPro" id="IPR006204">
    <property type="entry name" value="GHMP_kinase_N_dom"/>
</dbReference>
<dbReference type="InterPro" id="IPR004424">
    <property type="entry name" value="IspE"/>
</dbReference>
<dbReference type="InterPro" id="IPR020568">
    <property type="entry name" value="Ribosomal_Su5_D2-typ_SF"/>
</dbReference>
<dbReference type="InterPro" id="IPR014721">
    <property type="entry name" value="Ribsml_uS5_D2-typ_fold_subgr"/>
</dbReference>
<dbReference type="NCBIfam" id="TIGR00154">
    <property type="entry name" value="ispE"/>
    <property type="match status" value="1"/>
</dbReference>
<dbReference type="PANTHER" id="PTHR43527">
    <property type="entry name" value="4-DIPHOSPHOCYTIDYL-2-C-METHYL-D-ERYTHRITOL KINASE, CHLOROPLASTIC"/>
    <property type="match status" value="1"/>
</dbReference>
<dbReference type="PANTHER" id="PTHR43527:SF2">
    <property type="entry name" value="4-DIPHOSPHOCYTIDYL-2-C-METHYL-D-ERYTHRITOL KINASE, CHLOROPLASTIC"/>
    <property type="match status" value="1"/>
</dbReference>
<dbReference type="Pfam" id="PF08544">
    <property type="entry name" value="GHMP_kinases_C"/>
    <property type="match status" value="1"/>
</dbReference>
<dbReference type="Pfam" id="PF00288">
    <property type="entry name" value="GHMP_kinases_N"/>
    <property type="match status" value="1"/>
</dbReference>
<dbReference type="PIRSF" id="PIRSF010376">
    <property type="entry name" value="IspE"/>
    <property type="match status" value="1"/>
</dbReference>
<dbReference type="SUPFAM" id="SSF55060">
    <property type="entry name" value="GHMP Kinase, C-terminal domain"/>
    <property type="match status" value="1"/>
</dbReference>
<dbReference type="SUPFAM" id="SSF54211">
    <property type="entry name" value="Ribosomal protein S5 domain 2-like"/>
    <property type="match status" value="1"/>
</dbReference>
<proteinExistence type="inferred from homology"/>
<sequence>MIVTEKAPAKINLALDTPMRYLDGLPRWNMVMNAVDLADYVTVEIHHRPQTIKVYTNSGFLPNDQRNLAYQAAHILKTRFHQTDGVTIRIKKKIPVAAGLGGGSSDAAAVLRALNKAWRLGLSLDELARLSLSIDSDVPFCVYSQTAHVTGHGEIVEPLPAFPHYWVVIAKPKLSVSTPVILRQINYERLVHPQTDQLVEAIKEGKFQESFQYMGNALEAVTMEAHPEIARLKERMQKLGADVAQMSGTGPSVFALCHAESRAKRIYNSLRGFCPEVYQVVLL</sequence>
<evidence type="ECO:0000255" key="1">
    <source>
        <dbReference type="HAMAP-Rule" id="MF_00061"/>
    </source>
</evidence>
<comment type="function">
    <text evidence="1">Catalyzes the phosphorylation of the position 2 hydroxy group of 4-diphosphocytidyl-2C-methyl-D-erythritol.</text>
</comment>
<comment type="catalytic activity">
    <reaction evidence="1">
        <text>4-CDP-2-C-methyl-D-erythritol + ATP = 4-CDP-2-C-methyl-D-erythritol 2-phosphate + ADP + H(+)</text>
        <dbReference type="Rhea" id="RHEA:18437"/>
        <dbReference type="ChEBI" id="CHEBI:15378"/>
        <dbReference type="ChEBI" id="CHEBI:30616"/>
        <dbReference type="ChEBI" id="CHEBI:57823"/>
        <dbReference type="ChEBI" id="CHEBI:57919"/>
        <dbReference type="ChEBI" id="CHEBI:456216"/>
        <dbReference type="EC" id="2.7.1.148"/>
    </reaction>
</comment>
<comment type="pathway">
    <text evidence="1">Isoprenoid biosynthesis; isopentenyl diphosphate biosynthesis via DXP pathway; isopentenyl diphosphate from 1-deoxy-D-xylulose 5-phosphate: step 3/6.</text>
</comment>
<comment type="similarity">
    <text evidence="1">Belongs to the GHMP kinase family. IspE subfamily.</text>
</comment>
<protein>
    <recommendedName>
        <fullName evidence="1">4-diphosphocytidyl-2-C-methyl-D-erythritol kinase</fullName>
        <shortName evidence="1">CMK</shortName>
        <ecNumber evidence="1">2.7.1.148</ecNumber>
    </recommendedName>
    <alternativeName>
        <fullName evidence="1">4-(cytidine-5'-diphospho)-2-C-methyl-D-erythritol kinase</fullName>
    </alternativeName>
</protein>